<sequence>MSEKSGQSTKAKDGKKYATLSLFNTYKGKSLETQKTTVAARHGLQSLGKVGISRRMPPPANLPSLKAENKGNDPNVNIVPKDGTGWASKQEQHEEEKAPEVSPAQPKPGVAAPPEVAPAPKSWASNKQGGQGDGIQVNSQFQQEFPSLQAAGDQEKKEKEANDENYGPGPSLRPPNVACWRDGGKSAGSPSSDQDEKQLGQDESTAITSEQNDILKVVEKRIACGPPQAKLNGQQPALASQYRAMMPPYMFQQYPRMAYPPLHGPMRFPPSLSEANKSLRGRGPPPSWASEPERPSILSASELKELDKFDNLDAEADEGWAGAQMEVDYTEQLNFSDDDEQGSTSPKESSSEDQTAKTPESTENRKEVDEASSTKSSSQIPAQPPVTKSPYGKGPPFNQERGPSSHLPPPPKLLAQQHPPPPDRQIPGRQGPFPSKPPVPDNDEIWKQRRKQQSEISAAVERARKRREEEERRMEEQRKAACAEKLKQLDEKLGIIEKQPSPEELREREREKERERELEKEKERELEKEQEKQREMERARQQEKELEQQREKEQELQRLREQEKEGEPKEQEKEEKVEPQEPVVEPATENQESENNCKKEEEPIFTRQDSNRSEKETTQVVQEAEPESGAQPRPGYFKQFQKSLPPRFQRQQEQMKQQQWQQQQQQQQQGVLPQTVPSQPSNGSVPPPPHRPLYQPMQPHPQHLASMGFDPRWLMMQSYMDPRMISGRPAMDIPPIHPGMIPPKPLIRRDQMEGSPNSSESFEHIARSARDHGISLSEPRMMWGSDPYHAEPQQAATPKSAEETGDARPETAMDHEHMTAAYPVEHSQLETHSKTDVARDSTETEEQKFLSRSLEDVKPRHVDTNTQSACFDVIDQKSLPTSAEERISALESQPARKRSVSHGSNHAQNAEEQRNEPSVSIPKVINRCMDSKETVEKPEEKPRKDGFLRSSEGPKPEKVYKSKSETRWGPRPSSNRREEGNDRPVRRSGPIKKPVLRDMKEEREQRKEKEGEKLEKVTEKVVKAEKPEKKDLPLPLPPPAPAQPQPQPLVSPPVQPEPEKPPSTETSTLTQKPSQDEKPLEPVGSVQVEPVVKTVNQQSVAAPTVKEEKPPEKVINKDVGIERSRPDSRLAVKKDSSLPTRTYWKEARDRDWFPDQGYRGRGRGEYYSRGRSYRGSYGGRGRGGRGHTREYPQYRDNKPRTEHVPSGPLRQREESETRSESSDFEVVPKRRRQRGSETDTDSEVHESASDKDSVSKGKLPKREERPENKKPVKPQSSFKPENHVRIDNRPLEKPYIREEDKSKPGFLPKGEPTRRGRGGTFRRGGRDPGGRPSRPATLRRPAYRDNQWNTRQAEPPKPEDGEPPRRHEQFMPIPADKRPPKFERKFDPARERPRRQRPTRPPRQDKPPRFRRLREREAASKTSEVLVPSNGTANNVVQEPVNPPADISGNKTPDLSNQNSSDQANEEWETASESSDFNERRERDEKKNADKSSQAVVKAGESVLPPKREIAKRSFSSQRPGVDRQNRRGNNGPPKSGRNFSGPRNERRNGPPSKGGKRGPFDDQASGTAGADPVSGNSAHHQEGVPNGAGQKNSKDAAGKKREDTKPGPKKPKEKVDALSQFDLNNYASVVIIDDHPEVTVIEDPQSNLNDDGFTEVVSKKQQKRLQDEERRKKEEQVVQVWSKKNIGEKGRSQTSKLPPRFAKKQATGTQQIQAPPSAPVPVSSSAPGLTAPAAAAPASTPAPVPILASATALVPVSTPAPVLTSCPAPVPTSASAPVPASTSSPVTASSSSQPSVPAPTPVLASASTTVSVPILTSASIPILASALAPATVSSPTPVVSATAVPSISTPAVPASAPTASVPLAPASAASTVPPPASTVQTQTQTQTHKPVQSPLPPSAPSSKQPPPSIRLPSAQTSNGTDFVAAGKSMPTSQSHGSLTAELWDSKVAAPAVLNDISKKLGPISPPQPPSVSAWNKPLTSFGSATSSEGTRNGQESGVEIGIDTIQFGAPASNGNENEVVPVLSEKATDKVPEPKEQRQKQPRAGPIKAQKLPDLSLVENKEHKPGPIGKERSLKNRKVKDAQQVEPEGQEKPSPAVVRSTDPETAKETKAVSEMSAEIGAMISVSSAEYGSDAKESVTDYTTPSSSLPNTVATNNAKMEDTLVNNVPLPNTLPLPKRETIQQSSSLTSVPPTTFSLTFKMESARKAWENSPNLREKGSPVTSTAPPIVSGVSSSASGPSTANYSSFSSASMPQIPVASVTPTASLSGAGTYTTSSLSTKSTTTSDPPNICKVKPQQLQTSSLPSASHFSQLSCMPSLIAQQQQSPQVYVSQSAAAQIPAFYMDTSHLFNTQHARLAPPSLAQQQGFQPGLSQPTSVQQIPIPIYAPLQGQHQAQLSLGAGPAVSQAQELFSSSIQPYRSQPAFMQSSLSQPSVVLSGTAIHNFPAVQHQELAKAQSGLAFQQTSNPQPIPILYDHQLGQASGLGSSQLIDTHLLQARANLTQASNLYSGQVQQPGQTNFYNTAQSPSALQQVTVPLPASQLSLTNFGSTGQPLIALPQTLQPQLQHTTPQAQAQSLSRPAQVSQPFRGLIPAGTQHSMMATTGKMSEMELKAFGSGIDIKPGTPPIGGRSTTPTSSPFRATSTSPNSQSSKMNSVVYQKQFQSAPATVRMAQPFPAQFAPQILSQPNLVPPLVRAPHTNTFPAPVQRPPMALASQMPPPLTTGLMSHARLPHVARGPCGSLSGVRGNQAQAALKAEQDLKAKQRAEVLQSTQRFFSEQQQNKQIGGKTQRVDSDTSNPETLSDPPGTCPEKVEEKPPPAPTITTKPVRTGPIKPQAIKTEETKS</sequence>
<keyword id="KW-0007">Acetylation</keyword>
<keyword id="KW-0025">Alternative splicing</keyword>
<keyword id="KW-0175">Coiled coil</keyword>
<keyword id="KW-0963">Cytoplasm</keyword>
<keyword id="KW-1017">Isopeptide bond</keyword>
<keyword id="KW-0488">Methylation</keyword>
<keyword id="KW-0597">Phosphoprotein</keyword>
<keyword id="KW-1185">Reference proteome</keyword>
<keyword id="KW-0832">Ubl conjugation</keyword>
<evidence type="ECO:0000250" key="1">
    <source>
        <dbReference type="UniProtKB" id="Q9Y520"/>
    </source>
</evidence>
<evidence type="ECO:0000255" key="2"/>
<evidence type="ECO:0000256" key="3">
    <source>
        <dbReference type="SAM" id="MobiDB-lite"/>
    </source>
</evidence>
<evidence type="ECO:0000303" key="4">
    <source>
    </source>
</evidence>
<evidence type="ECO:0000305" key="5"/>
<evidence type="ECO:0007744" key="6">
    <source>
    </source>
</evidence>
<evidence type="ECO:0007744" key="7">
    <source>
    </source>
</evidence>
<evidence type="ECO:0007744" key="8">
    <source>
    </source>
</evidence>
<evidence type="ECO:0007744" key="9">
    <source>
    </source>
</evidence>
<evidence type="ECO:0007744" key="10">
    <source>
    </source>
</evidence>
<feature type="chain" id="PRO_0000349240" description="Protein PRRC2C">
    <location>
        <begin position="1"/>
        <end position="2846"/>
    </location>
</feature>
<feature type="region of interest" description="Disordered" evidence="3">
    <location>
        <begin position="46"/>
        <end position="212"/>
    </location>
</feature>
<feature type="region of interest" description="Disordered" evidence="3">
    <location>
        <begin position="264"/>
        <end position="705"/>
    </location>
</feature>
<feature type="region of interest" description="Disordered" evidence="3">
    <location>
        <begin position="777"/>
        <end position="1619"/>
    </location>
</feature>
<feature type="region of interest" description="Disordered" evidence="3">
    <location>
        <begin position="1642"/>
        <end position="1742"/>
    </location>
</feature>
<feature type="region of interest" description="Disordered" evidence="3">
    <location>
        <begin position="1762"/>
        <end position="1803"/>
    </location>
</feature>
<feature type="region of interest" description="Disordered" evidence="3">
    <location>
        <begin position="1866"/>
        <end position="1938"/>
    </location>
</feature>
<feature type="region of interest" description="Disordered" evidence="3">
    <location>
        <begin position="1960"/>
        <end position="1996"/>
    </location>
</feature>
<feature type="region of interest" description="Disordered" evidence="3">
    <location>
        <begin position="2025"/>
        <end position="2108"/>
    </location>
</feature>
<feature type="region of interest" description="Disordered" evidence="3">
    <location>
        <begin position="2209"/>
        <end position="2249"/>
    </location>
</feature>
<feature type="region of interest" description="Disordered" evidence="3">
    <location>
        <begin position="2269"/>
        <end position="2293"/>
    </location>
</feature>
<feature type="region of interest" description="Disordered" evidence="3">
    <location>
        <begin position="2617"/>
        <end position="2655"/>
    </location>
</feature>
<feature type="region of interest" description="Disordered" evidence="3">
    <location>
        <begin position="2778"/>
        <end position="2846"/>
    </location>
</feature>
<feature type="coiled-coil region" evidence="2">
    <location>
        <begin position="995"/>
        <end position="1026"/>
    </location>
</feature>
<feature type="coiled-coil region" evidence="2">
    <location>
        <begin position="1655"/>
        <end position="1681"/>
    </location>
</feature>
<feature type="compositionally biased region" description="Basic and acidic residues" evidence="3">
    <location>
        <begin position="90"/>
        <end position="99"/>
    </location>
</feature>
<feature type="compositionally biased region" description="Low complexity" evidence="3">
    <location>
        <begin position="107"/>
        <end position="121"/>
    </location>
</feature>
<feature type="compositionally biased region" description="Polar residues" evidence="3">
    <location>
        <begin position="136"/>
        <end position="146"/>
    </location>
</feature>
<feature type="compositionally biased region" description="Basic and acidic residues" evidence="3">
    <location>
        <begin position="153"/>
        <end position="162"/>
    </location>
</feature>
<feature type="compositionally biased region" description="Polar residues" evidence="3">
    <location>
        <begin position="201"/>
        <end position="212"/>
    </location>
</feature>
<feature type="compositionally biased region" description="Basic and acidic residues" evidence="3">
    <location>
        <begin position="302"/>
        <end position="311"/>
    </location>
</feature>
<feature type="compositionally biased region" description="Polar residues" evidence="3">
    <location>
        <begin position="342"/>
        <end position="359"/>
    </location>
</feature>
<feature type="compositionally biased region" description="Basic and acidic residues" evidence="3">
    <location>
        <begin position="360"/>
        <end position="369"/>
    </location>
</feature>
<feature type="compositionally biased region" description="Polar residues" evidence="3">
    <location>
        <begin position="371"/>
        <end position="381"/>
    </location>
</feature>
<feature type="compositionally biased region" description="Pro residues" evidence="3">
    <location>
        <begin position="406"/>
        <end position="424"/>
    </location>
</feature>
<feature type="compositionally biased region" description="Basic and acidic residues" evidence="3">
    <location>
        <begin position="466"/>
        <end position="579"/>
    </location>
</feature>
<feature type="compositionally biased region" description="Basic and acidic residues" evidence="3">
    <location>
        <begin position="595"/>
        <end position="617"/>
    </location>
</feature>
<feature type="compositionally biased region" description="Low complexity" evidence="3">
    <location>
        <begin position="649"/>
        <end position="669"/>
    </location>
</feature>
<feature type="compositionally biased region" description="Polar residues" evidence="3">
    <location>
        <begin position="670"/>
        <end position="684"/>
    </location>
</feature>
<feature type="compositionally biased region" description="Basic and acidic residues" evidence="3">
    <location>
        <begin position="800"/>
        <end position="818"/>
    </location>
</feature>
<feature type="compositionally biased region" description="Basic and acidic residues" evidence="3">
    <location>
        <begin position="827"/>
        <end position="863"/>
    </location>
</feature>
<feature type="compositionally biased region" description="Basic and acidic residues" evidence="3">
    <location>
        <begin position="929"/>
        <end position="968"/>
    </location>
</feature>
<feature type="compositionally biased region" description="Basic and acidic residues" evidence="3">
    <location>
        <begin position="975"/>
        <end position="985"/>
    </location>
</feature>
<feature type="compositionally biased region" description="Basic and acidic residues" evidence="3">
    <location>
        <begin position="995"/>
        <end position="1032"/>
    </location>
</feature>
<feature type="compositionally biased region" description="Pro residues" evidence="3">
    <location>
        <begin position="1034"/>
        <end position="1056"/>
    </location>
</feature>
<feature type="compositionally biased region" description="Basic and acidic residues" evidence="3">
    <location>
        <begin position="1105"/>
        <end position="1136"/>
    </location>
</feature>
<feature type="compositionally biased region" description="Basic and acidic residues" evidence="3">
    <location>
        <begin position="1143"/>
        <end position="1153"/>
    </location>
</feature>
<feature type="compositionally biased region" description="Basic and acidic residues" evidence="3">
    <location>
        <begin position="1187"/>
        <end position="1203"/>
    </location>
</feature>
<feature type="compositionally biased region" description="Basic and acidic residues" evidence="3">
    <location>
        <begin position="1210"/>
        <end position="1221"/>
    </location>
</feature>
<feature type="compositionally biased region" description="Basic and acidic residues" evidence="3">
    <location>
        <begin position="1234"/>
        <end position="1270"/>
    </location>
</feature>
<feature type="compositionally biased region" description="Basic and acidic residues" evidence="3">
    <location>
        <begin position="1280"/>
        <end position="1303"/>
    </location>
</feature>
<feature type="compositionally biased region" description="Basic and acidic residues" evidence="3">
    <location>
        <begin position="1354"/>
        <end position="1391"/>
    </location>
</feature>
<feature type="compositionally biased region" description="Basic and acidic residues" evidence="3">
    <location>
        <begin position="1402"/>
        <end position="1419"/>
    </location>
</feature>
<feature type="compositionally biased region" description="Polar residues" evidence="3">
    <location>
        <begin position="1449"/>
        <end position="1463"/>
    </location>
</feature>
<feature type="compositionally biased region" description="Basic and acidic residues" evidence="3">
    <location>
        <begin position="1477"/>
        <end position="1490"/>
    </location>
</feature>
<feature type="compositionally biased region" description="Basic and acidic residues" evidence="3">
    <location>
        <begin position="1593"/>
        <end position="1607"/>
    </location>
</feature>
<feature type="compositionally biased region" description="Basic and acidic residues" evidence="3">
    <location>
        <begin position="1665"/>
        <end position="1677"/>
    </location>
</feature>
<feature type="compositionally biased region" description="Low complexity" evidence="3">
    <location>
        <begin position="1721"/>
        <end position="1742"/>
    </location>
</feature>
<feature type="compositionally biased region" description="Low complexity" evidence="3">
    <location>
        <begin position="1765"/>
        <end position="1796"/>
    </location>
</feature>
<feature type="compositionally biased region" description="Low complexity" evidence="3">
    <location>
        <begin position="1866"/>
        <end position="1893"/>
    </location>
</feature>
<feature type="compositionally biased region" description="Pro residues" evidence="3">
    <location>
        <begin position="1894"/>
        <end position="1910"/>
    </location>
</feature>
<feature type="compositionally biased region" description="Polar residues" evidence="3">
    <location>
        <begin position="1971"/>
        <end position="1996"/>
    </location>
</feature>
<feature type="compositionally biased region" description="Basic and acidic residues" evidence="3">
    <location>
        <begin position="2027"/>
        <end position="2040"/>
    </location>
</feature>
<feature type="compositionally biased region" description="Basic and acidic residues" evidence="3">
    <location>
        <begin position="2060"/>
        <end position="2084"/>
    </location>
</feature>
<feature type="compositionally biased region" description="Basic and acidic residues" evidence="3">
    <location>
        <begin position="2209"/>
        <end position="2219"/>
    </location>
</feature>
<feature type="compositionally biased region" description="Low complexity" evidence="3">
    <location>
        <begin position="2230"/>
        <end position="2249"/>
    </location>
</feature>
<feature type="compositionally biased region" description="Low complexity" evidence="3">
    <location>
        <begin position="2272"/>
        <end position="2286"/>
    </location>
</feature>
<feature type="compositionally biased region" description="Polar residues" evidence="3">
    <location>
        <begin position="2631"/>
        <end position="2655"/>
    </location>
</feature>
<feature type="modified residue" description="N6-acetyllysine" evidence="1">
    <location>
        <position position="27"/>
    </location>
</feature>
<feature type="modified residue" description="Phosphoserine" evidence="8">
    <location>
        <position position="102"/>
    </location>
</feature>
<feature type="modified residue" description="Phosphoserine" evidence="1">
    <location>
        <position position="189"/>
    </location>
</feature>
<feature type="modified residue" description="Phosphoserine" evidence="9">
    <location>
        <position position="192"/>
    </location>
</feature>
<feature type="modified residue" description="Asymmetric dimethylarginine; alternate" evidence="10">
    <location>
        <position position="243"/>
    </location>
</feature>
<feature type="modified residue" description="Omega-N-methylarginine; alternate" evidence="10">
    <location>
        <position position="243"/>
    </location>
</feature>
<feature type="modified residue" description="Asymmetric dimethylarginine" evidence="1">
    <location>
        <position position="256"/>
    </location>
</feature>
<feature type="modified residue" description="Asymmetric dimethylarginine" evidence="1">
    <location>
        <position position="267"/>
    </location>
</feature>
<feature type="modified residue" description="Omega-N-methylarginine" evidence="10">
    <location>
        <position position="280"/>
    </location>
</feature>
<feature type="modified residue" description="Omega-N-methylarginine" evidence="10">
    <location>
        <position position="282"/>
    </location>
</feature>
<feature type="modified residue" description="Phosphoserine" evidence="1">
    <location>
        <position position="336"/>
    </location>
</feature>
<feature type="modified residue" description="N6-acetyllysine" evidence="1">
    <location>
        <position position="393"/>
    </location>
</feature>
<feature type="modified residue" description="Phosphoserine" evidence="1">
    <location>
        <position position="501"/>
    </location>
</feature>
<feature type="modified residue" description="Phosphoserine" evidence="1">
    <location>
        <position position="755"/>
    </location>
</feature>
<feature type="modified residue" description="Phosphoserine" evidence="1">
    <location>
        <position position="761"/>
    </location>
</feature>
<feature type="modified residue" description="Phosphoserine" evidence="1">
    <location>
        <position position="777"/>
    </location>
</feature>
<feature type="modified residue" description="Phosphoserine" evidence="8">
    <location>
        <position position="853"/>
    </location>
</feature>
<feature type="modified residue" description="Phosphoserine" evidence="9">
    <location>
        <position position="904"/>
    </location>
</feature>
<feature type="modified residue" description="Phosphoserine" evidence="1">
    <location>
        <position position="1215"/>
    </location>
</feature>
<feature type="modified residue" description="Phosphoserine" evidence="1">
    <location>
        <position position="1219"/>
    </location>
</feature>
<feature type="modified residue" description="Phosphoserine" evidence="1">
    <location>
        <position position="1221"/>
    </location>
</feature>
<feature type="modified residue" description="Phosphoserine" evidence="1">
    <location>
        <position position="1222"/>
    </location>
</feature>
<feature type="modified residue" description="Phosphoserine" evidence="1">
    <location>
        <position position="1236"/>
    </location>
</feature>
<feature type="modified residue" description="Phosphothreonine" evidence="9">
    <location>
        <position position="1238"/>
    </location>
</feature>
<feature type="modified residue" description="Phosphothreonine" evidence="1">
    <location>
        <position position="1240"/>
    </location>
</feature>
<feature type="modified residue" description="Phosphoserine" evidence="1">
    <location>
        <position position="1516"/>
    </location>
</feature>
<feature type="modified residue" description="Phosphothreonine" evidence="1">
    <location>
        <position position="1917"/>
    </location>
</feature>
<feature type="modified residue" description="Phosphoserine" evidence="9">
    <location>
        <position position="1935"/>
    </location>
</feature>
<feature type="modified residue" description="Phosphoserine" evidence="9">
    <location>
        <position position="1938"/>
    </location>
</feature>
<feature type="modified residue" description="Phosphoserine" evidence="1">
    <location>
        <position position="1965"/>
    </location>
</feature>
<feature type="modified residue" description="Phosphoserine" evidence="1">
    <location>
        <position position="2057"/>
    </location>
</feature>
<feature type="modified residue" description="Phosphoserine" evidence="1">
    <location>
        <position position="2095"/>
    </location>
</feature>
<feature type="modified residue" description="Phosphoserine" evidence="1">
    <location>
        <position position="2212"/>
    </location>
</feature>
<feature type="modified residue" description="Phosphothreonine" evidence="6 7 8 9">
    <location>
        <position position="2625"/>
    </location>
</feature>
<feature type="modified residue" description="Phosphothreonine" evidence="1">
    <location>
        <position position="2634"/>
    </location>
</feature>
<feature type="modified residue" description="Phosphoserine" evidence="1">
    <location>
        <position position="2638"/>
    </location>
</feature>
<feature type="modified residue" description="Phosphoserine" evidence="1">
    <location>
        <position position="2646"/>
    </location>
</feature>
<feature type="modified residue" description="Omega-N-methylarginine" evidence="10">
    <location>
        <position position="2766"/>
    </location>
</feature>
<feature type="modified residue" description="Asymmetric dimethylarginine; alternate" evidence="10">
    <location>
        <position position="2775"/>
    </location>
</feature>
<feature type="modified residue" description="Omega-N-methylarginine; alternate" evidence="10">
    <location>
        <position position="2775"/>
    </location>
</feature>
<feature type="cross-link" description="Glycyl lysine isopeptide (Lys-Gly) (interchain with G-Cter in SUMO2)" evidence="1">
    <location>
        <position position="1106"/>
    </location>
</feature>
<feature type="splice variant" id="VSP_035255" description="In isoform 5." evidence="4">
    <location>
        <begin position="2684"/>
        <end position="2762"/>
    </location>
</feature>
<feature type="sequence conflict" description="In Ref. 2; AAH80672/BAC25414/BAE38818/BAE39192." evidence="5" ref="2">
    <location>
        <begin position="38"/>
        <end position="39"/>
    </location>
</feature>
<feature type="sequence conflict" description="In Ref. 2; BAE38818." evidence="5" ref="2">
    <original>S</original>
    <variation>C</variation>
    <location>
        <position position="186"/>
    </location>
</feature>
<feature type="sequence conflict" description="In Ref. 2; BAC25414." evidence="5" ref="2">
    <original>G</original>
    <variation>V</variation>
    <location>
        <position position="264"/>
    </location>
</feature>
<feature type="sequence conflict" description="In Ref. 2; BAC25414." evidence="5" ref="2">
    <original>K</original>
    <variation>E</variation>
    <location>
        <position position="347"/>
    </location>
</feature>
<feature type="sequence conflict" description="In Ref. 2; BAC25414." evidence="5" ref="2">
    <original>SSS</original>
    <variation>IIF</variation>
    <location>
        <begin position="376"/>
        <end position="378"/>
    </location>
</feature>
<feature type="sequence conflict" description="In Ref. 2; BAE38818." evidence="5" ref="2">
    <original>A</original>
    <variation>T</variation>
    <location>
        <position position="382"/>
    </location>
</feature>
<feature type="sequence conflict" description="In Ref. 3; AAH64009." evidence="5" ref="3">
    <original>E</original>
    <variation>K</variation>
    <location>
        <position position="563"/>
    </location>
</feature>
<feature type="sequence conflict" description="In Ref. 2; BAE38818." evidence="5" ref="2">
    <original>E</original>
    <variation>G</variation>
    <location>
        <position position="846"/>
    </location>
</feature>
<feature type="sequence conflict" description="In Ref. 4; BAC65723." evidence="5" ref="4">
    <original>E</original>
    <variation>G</variation>
    <location>
        <position position="1362"/>
    </location>
</feature>
<feature type="sequence conflict" description="In Ref. 4; BAC65723." evidence="5" ref="4">
    <original>K</original>
    <variation>M</variation>
    <location>
        <position position="1491"/>
    </location>
</feature>
<feature type="sequence conflict" description="In Ref. 3; AAH50871." evidence="5" ref="3">
    <original>N</original>
    <variation>K</variation>
    <location>
        <position position="1686"/>
    </location>
</feature>
<gene>
    <name type="primary">Prrc2c</name>
    <name type="synonym">Bat2d</name>
    <name type="synonym">Bat2d1</name>
    <name type="synonym">Bat2l2</name>
    <name type="synonym">Kiaa1096</name>
</gene>
<proteinExistence type="evidence at protein level"/>
<dbReference type="EMBL" id="AC118643">
    <property type="status" value="NOT_ANNOTATED_CDS"/>
    <property type="molecule type" value="Genomic_DNA"/>
</dbReference>
<dbReference type="EMBL" id="AC132867">
    <property type="status" value="NOT_ANNOTATED_CDS"/>
    <property type="molecule type" value="Genomic_DNA"/>
</dbReference>
<dbReference type="EMBL" id="AK013732">
    <property type="protein sequence ID" value="BAC25414.1"/>
    <property type="status" value="ALT_FRAME"/>
    <property type="molecule type" value="mRNA"/>
</dbReference>
<dbReference type="EMBL" id="AK030766">
    <property type="protein sequence ID" value="BAC27127.1"/>
    <property type="molecule type" value="mRNA"/>
</dbReference>
<dbReference type="EMBL" id="AK135245">
    <property type="protein sequence ID" value="BAE22468.1"/>
    <property type="status" value="ALT_SEQ"/>
    <property type="molecule type" value="mRNA"/>
</dbReference>
<dbReference type="EMBL" id="AK166509">
    <property type="protein sequence ID" value="BAE38818.1"/>
    <property type="molecule type" value="mRNA"/>
</dbReference>
<dbReference type="EMBL" id="AK167018">
    <property type="protein sequence ID" value="BAE39192.1"/>
    <property type="molecule type" value="mRNA"/>
</dbReference>
<dbReference type="EMBL" id="BC006723">
    <property type="protein sequence ID" value="AAH06723.1"/>
    <property type="status" value="ALT_SEQ"/>
    <property type="molecule type" value="mRNA"/>
</dbReference>
<dbReference type="EMBL" id="BC021412">
    <property type="protein sequence ID" value="AAH21412.1"/>
    <property type="status" value="ALT_SEQ"/>
    <property type="molecule type" value="mRNA"/>
</dbReference>
<dbReference type="EMBL" id="BC037745">
    <property type="protein sequence ID" value="AAH37745.1"/>
    <property type="status" value="ALT_SEQ"/>
    <property type="molecule type" value="mRNA"/>
</dbReference>
<dbReference type="EMBL" id="BC050871">
    <property type="protein sequence ID" value="AAH50871.1"/>
    <property type="molecule type" value="mRNA"/>
</dbReference>
<dbReference type="EMBL" id="BC064009">
    <property type="protein sequence ID" value="AAH64009.1"/>
    <property type="molecule type" value="mRNA"/>
</dbReference>
<dbReference type="EMBL" id="BC080672">
    <property type="protein sequence ID" value="AAH80672.1"/>
    <property type="status" value="ALT_SEQ"/>
    <property type="molecule type" value="mRNA"/>
</dbReference>
<dbReference type="EMBL" id="BC099612">
    <property type="protein sequence ID" value="AAH99612.1"/>
    <property type="status" value="ALT_SEQ"/>
    <property type="molecule type" value="mRNA"/>
</dbReference>
<dbReference type="EMBL" id="AK122441">
    <property type="protein sequence ID" value="BAC65723.1"/>
    <property type="status" value="ALT_FRAME"/>
    <property type="molecule type" value="Transcribed_RNA"/>
</dbReference>
<dbReference type="CCDS" id="CCDS35749.1">
    <molecule id="Q3TLH4-1"/>
</dbReference>
<dbReference type="RefSeq" id="NP_001074759.1">
    <molecule id="Q3TLH4-1"/>
    <property type="nucleotide sequence ID" value="NM_001081290.1"/>
</dbReference>
<dbReference type="RefSeq" id="XP_011237086.1">
    <molecule id="Q3TLH4-5"/>
    <property type="nucleotide sequence ID" value="XM_011238784.4"/>
</dbReference>
<dbReference type="SMR" id="Q3TLH4"/>
<dbReference type="BioGRID" id="230531">
    <property type="interactions" value="28"/>
</dbReference>
<dbReference type="FunCoup" id="Q3TLH4">
    <property type="interactions" value="2715"/>
</dbReference>
<dbReference type="IntAct" id="Q3TLH4">
    <property type="interactions" value="7"/>
</dbReference>
<dbReference type="MINT" id="Q3TLH4"/>
<dbReference type="STRING" id="10090.ENSMUSP00000138433"/>
<dbReference type="GlyGen" id="Q3TLH4">
    <property type="glycosylation" value="33 sites, 1 N-linked glycan (1 site), 1 O-linked glycan (27 sites)"/>
</dbReference>
<dbReference type="iPTMnet" id="Q3TLH4"/>
<dbReference type="PhosphoSitePlus" id="Q3TLH4"/>
<dbReference type="SwissPalm" id="Q3TLH4"/>
<dbReference type="jPOST" id="Q3TLH4"/>
<dbReference type="PaxDb" id="10090-ENSMUSP00000138433"/>
<dbReference type="PeptideAtlas" id="Q3TLH4"/>
<dbReference type="ProteomicsDB" id="289396">
    <molecule id="Q3TLH4-1"/>
</dbReference>
<dbReference type="ProteomicsDB" id="289397">
    <molecule id="Q3TLH4-5"/>
</dbReference>
<dbReference type="Pumba" id="Q3TLH4"/>
<dbReference type="Antibodypedia" id="20552">
    <property type="antibodies" value="28 antibodies from 10 providers"/>
</dbReference>
<dbReference type="Ensembl" id="ENSMUST00000182660.8">
    <molecule id="Q3TLH4-1"/>
    <property type="protein sequence ID" value="ENSMUSP00000138433.2"/>
    <property type="gene ID" value="ENSMUSG00000040225.16"/>
</dbReference>
<dbReference type="GeneID" id="226562"/>
<dbReference type="KEGG" id="mmu:226562"/>
<dbReference type="UCSC" id="uc007dgr.1">
    <molecule id="Q3TLH4-1"/>
    <property type="organism name" value="mouse"/>
</dbReference>
<dbReference type="AGR" id="MGI:1913754"/>
<dbReference type="CTD" id="23215"/>
<dbReference type="MGI" id="MGI:1913754">
    <property type="gene designation" value="Prrc2c"/>
</dbReference>
<dbReference type="VEuPathDB" id="HostDB:ENSMUSG00000040225"/>
<dbReference type="eggNOG" id="KOG4817">
    <property type="taxonomic scope" value="Eukaryota"/>
</dbReference>
<dbReference type="GeneTree" id="ENSGT00950000183161"/>
<dbReference type="HOGENOM" id="CLU_000586_0_0_1"/>
<dbReference type="InParanoid" id="Q3TLH4"/>
<dbReference type="OMA" id="SETNXED"/>
<dbReference type="OrthoDB" id="1939715at2759"/>
<dbReference type="PhylomeDB" id="Q3TLH4"/>
<dbReference type="BioGRID-ORCS" id="226562">
    <property type="hits" value="12 hits in 77 CRISPR screens"/>
</dbReference>
<dbReference type="CD-CODE" id="CE726F99">
    <property type="entry name" value="Postsynaptic density"/>
</dbReference>
<dbReference type="ChiTaRS" id="Prrc2c">
    <property type="organism name" value="mouse"/>
</dbReference>
<dbReference type="PRO" id="PR:Q3TLH4"/>
<dbReference type="Proteomes" id="UP000000589">
    <property type="component" value="Chromosome 1"/>
</dbReference>
<dbReference type="RNAct" id="Q3TLH4">
    <property type="molecule type" value="protein"/>
</dbReference>
<dbReference type="Bgee" id="ENSMUSG00000040225">
    <property type="expression patterns" value="Expressed in dorsal pancreas and 237 other cell types or tissues"/>
</dbReference>
<dbReference type="ExpressionAtlas" id="Q3TLH4">
    <property type="expression patterns" value="baseline and differential"/>
</dbReference>
<dbReference type="GO" id="GO:0010494">
    <property type="term" value="C:cytoplasmic stress granule"/>
    <property type="evidence" value="ECO:0007669"/>
    <property type="project" value="UniProtKB-SubCell"/>
</dbReference>
<dbReference type="GO" id="GO:0005829">
    <property type="term" value="C:cytosol"/>
    <property type="evidence" value="ECO:0007669"/>
    <property type="project" value="Ensembl"/>
</dbReference>
<dbReference type="GO" id="GO:0002244">
    <property type="term" value="P:hematopoietic progenitor cell differentiation"/>
    <property type="evidence" value="ECO:0000316"/>
    <property type="project" value="MGI"/>
</dbReference>
<dbReference type="GO" id="GO:0034063">
    <property type="term" value="P:stress granule assembly"/>
    <property type="evidence" value="ECO:0000250"/>
    <property type="project" value="UniProtKB"/>
</dbReference>
<dbReference type="InterPro" id="IPR009738">
    <property type="entry name" value="BAT2_N"/>
</dbReference>
<dbReference type="InterPro" id="IPR033184">
    <property type="entry name" value="PRRC2"/>
</dbReference>
<dbReference type="PANTHER" id="PTHR14038">
    <property type="entry name" value="BAT2 HLA-B-ASSOCIATED TRANSCRIPT 2"/>
    <property type="match status" value="1"/>
</dbReference>
<dbReference type="PANTHER" id="PTHR14038:SF6">
    <property type="entry name" value="PROTEIN PRRC2C"/>
    <property type="match status" value="1"/>
</dbReference>
<dbReference type="Pfam" id="PF07001">
    <property type="entry name" value="BAT2_N"/>
    <property type="match status" value="1"/>
</dbReference>
<name>PRC2C_MOUSE</name>
<organism>
    <name type="scientific">Mus musculus</name>
    <name type="common">Mouse</name>
    <dbReference type="NCBI Taxonomy" id="10090"/>
    <lineage>
        <taxon>Eukaryota</taxon>
        <taxon>Metazoa</taxon>
        <taxon>Chordata</taxon>
        <taxon>Craniata</taxon>
        <taxon>Vertebrata</taxon>
        <taxon>Euteleostomi</taxon>
        <taxon>Mammalia</taxon>
        <taxon>Eutheria</taxon>
        <taxon>Euarchontoglires</taxon>
        <taxon>Glires</taxon>
        <taxon>Rodentia</taxon>
        <taxon>Myomorpha</taxon>
        <taxon>Muroidea</taxon>
        <taxon>Muridae</taxon>
        <taxon>Murinae</taxon>
        <taxon>Mus</taxon>
        <taxon>Mus</taxon>
    </lineage>
</organism>
<reference key="1">
    <citation type="journal article" date="2009" name="PLoS Biol.">
        <title>Lineage-specific biology revealed by a finished genome assembly of the mouse.</title>
        <authorList>
            <person name="Church D.M."/>
            <person name="Goodstadt L."/>
            <person name="Hillier L.W."/>
            <person name="Zody M.C."/>
            <person name="Goldstein S."/>
            <person name="She X."/>
            <person name="Bult C.J."/>
            <person name="Agarwala R."/>
            <person name="Cherry J.L."/>
            <person name="DiCuccio M."/>
            <person name="Hlavina W."/>
            <person name="Kapustin Y."/>
            <person name="Meric P."/>
            <person name="Maglott D."/>
            <person name="Birtle Z."/>
            <person name="Marques A.C."/>
            <person name="Graves T."/>
            <person name="Zhou S."/>
            <person name="Teague B."/>
            <person name="Potamousis K."/>
            <person name="Churas C."/>
            <person name="Place M."/>
            <person name="Herschleb J."/>
            <person name="Runnheim R."/>
            <person name="Forrest D."/>
            <person name="Amos-Landgraf J."/>
            <person name="Schwartz D.C."/>
            <person name="Cheng Z."/>
            <person name="Lindblad-Toh K."/>
            <person name="Eichler E.E."/>
            <person name="Ponting C.P."/>
        </authorList>
    </citation>
    <scope>NUCLEOTIDE SEQUENCE [LARGE SCALE GENOMIC DNA]</scope>
    <source>
        <strain>C57BL/6J</strain>
    </source>
</reference>
<reference key="2">
    <citation type="journal article" date="2005" name="Science">
        <title>The transcriptional landscape of the mammalian genome.</title>
        <authorList>
            <person name="Carninci P."/>
            <person name="Kasukawa T."/>
            <person name="Katayama S."/>
            <person name="Gough J."/>
            <person name="Frith M.C."/>
            <person name="Maeda N."/>
            <person name="Oyama R."/>
            <person name="Ravasi T."/>
            <person name="Lenhard B."/>
            <person name="Wells C."/>
            <person name="Kodzius R."/>
            <person name="Shimokawa K."/>
            <person name="Bajic V.B."/>
            <person name="Brenner S.E."/>
            <person name="Batalov S."/>
            <person name="Forrest A.R."/>
            <person name="Zavolan M."/>
            <person name="Davis M.J."/>
            <person name="Wilming L.G."/>
            <person name="Aidinis V."/>
            <person name="Allen J.E."/>
            <person name="Ambesi-Impiombato A."/>
            <person name="Apweiler R."/>
            <person name="Aturaliya R.N."/>
            <person name="Bailey T.L."/>
            <person name="Bansal M."/>
            <person name="Baxter L."/>
            <person name="Beisel K.W."/>
            <person name="Bersano T."/>
            <person name="Bono H."/>
            <person name="Chalk A.M."/>
            <person name="Chiu K.P."/>
            <person name="Choudhary V."/>
            <person name="Christoffels A."/>
            <person name="Clutterbuck D.R."/>
            <person name="Crowe M.L."/>
            <person name="Dalla E."/>
            <person name="Dalrymple B.P."/>
            <person name="de Bono B."/>
            <person name="Della Gatta G."/>
            <person name="di Bernardo D."/>
            <person name="Down T."/>
            <person name="Engstrom P."/>
            <person name="Fagiolini M."/>
            <person name="Faulkner G."/>
            <person name="Fletcher C.F."/>
            <person name="Fukushima T."/>
            <person name="Furuno M."/>
            <person name="Futaki S."/>
            <person name="Gariboldi M."/>
            <person name="Georgii-Hemming P."/>
            <person name="Gingeras T.R."/>
            <person name="Gojobori T."/>
            <person name="Green R.E."/>
            <person name="Gustincich S."/>
            <person name="Harbers M."/>
            <person name="Hayashi Y."/>
            <person name="Hensch T.K."/>
            <person name="Hirokawa N."/>
            <person name="Hill D."/>
            <person name="Huminiecki L."/>
            <person name="Iacono M."/>
            <person name="Ikeo K."/>
            <person name="Iwama A."/>
            <person name="Ishikawa T."/>
            <person name="Jakt M."/>
            <person name="Kanapin A."/>
            <person name="Katoh M."/>
            <person name="Kawasawa Y."/>
            <person name="Kelso J."/>
            <person name="Kitamura H."/>
            <person name="Kitano H."/>
            <person name="Kollias G."/>
            <person name="Krishnan S.P."/>
            <person name="Kruger A."/>
            <person name="Kummerfeld S.K."/>
            <person name="Kurochkin I.V."/>
            <person name="Lareau L.F."/>
            <person name="Lazarevic D."/>
            <person name="Lipovich L."/>
            <person name="Liu J."/>
            <person name="Liuni S."/>
            <person name="McWilliam S."/>
            <person name="Madan Babu M."/>
            <person name="Madera M."/>
            <person name="Marchionni L."/>
            <person name="Matsuda H."/>
            <person name="Matsuzawa S."/>
            <person name="Miki H."/>
            <person name="Mignone F."/>
            <person name="Miyake S."/>
            <person name="Morris K."/>
            <person name="Mottagui-Tabar S."/>
            <person name="Mulder N."/>
            <person name="Nakano N."/>
            <person name="Nakauchi H."/>
            <person name="Ng P."/>
            <person name="Nilsson R."/>
            <person name="Nishiguchi S."/>
            <person name="Nishikawa S."/>
            <person name="Nori F."/>
            <person name="Ohara O."/>
            <person name="Okazaki Y."/>
            <person name="Orlando V."/>
            <person name="Pang K.C."/>
            <person name="Pavan W.J."/>
            <person name="Pavesi G."/>
            <person name="Pesole G."/>
            <person name="Petrovsky N."/>
            <person name="Piazza S."/>
            <person name="Reed J."/>
            <person name="Reid J.F."/>
            <person name="Ring B.Z."/>
            <person name="Ringwald M."/>
            <person name="Rost B."/>
            <person name="Ruan Y."/>
            <person name="Salzberg S.L."/>
            <person name="Sandelin A."/>
            <person name="Schneider C."/>
            <person name="Schoenbach C."/>
            <person name="Sekiguchi K."/>
            <person name="Semple C.A."/>
            <person name="Seno S."/>
            <person name="Sessa L."/>
            <person name="Sheng Y."/>
            <person name="Shibata Y."/>
            <person name="Shimada H."/>
            <person name="Shimada K."/>
            <person name="Silva D."/>
            <person name="Sinclair B."/>
            <person name="Sperling S."/>
            <person name="Stupka E."/>
            <person name="Sugiura K."/>
            <person name="Sultana R."/>
            <person name="Takenaka Y."/>
            <person name="Taki K."/>
            <person name="Tammoja K."/>
            <person name="Tan S.L."/>
            <person name="Tang S."/>
            <person name="Taylor M.S."/>
            <person name="Tegner J."/>
            <person name="Teichmann S.A."/>
            <person name="Ueda H.R."/>
            <person name="van Nimwegen E."/>
            <person name="Verardo R."/>
            <person name="Wei C.L."/>
            <person name="Yagi K."/>
            <person name="Yamanishi H."/>
            <person name="Zabarovsky E."/>
            <person name="Zhu S."/>
            <person name="Zimmer A."/>
            <person name="Hide W."/>
            <person name="Bult C."/>
            <person name="Grimmond S.M."/>
            <person name="Teasdale R.D."/>
            <person name="Liu E.T."/>
            <person name="Brusic V."/>
            <person name="Quackenbush J."/>
            <person name="Wahlestedt C."/>
            <person name="Mattick J.S."/>
            <person name="Hume D.A."/>
            <person name="Kai C."/>
            <person name="Sasaki D."/>
            <person name="Tomaru Y."/>
            <person name="Fukuda S."/>
            <person name="Kanamori-Katayama M."/>
            <person name="Suzuki M."/>
            <person name="Aoki J."/>
            <person name="Arakawa T."/>
            <person name="Iida J."/>
            <person name="Imamura K."/>
            <person name="Itoh M."/>
            <person name="Kato T."/>
            <person name="Kawaji H."/>
            <person name="Kawagashira N."/>
            <person name="Kawashima T."/>
            <person name="Kojima M."/>
            <person name="Kondo S."/>
            <person name="Konno H."/>
            <person name="Nakano K."/>
            <person name="Ninomiya N."/>
            <person name="Nishio T."/>
            <person name="Okada M."/>
            <person name="Plessy C."/>
            <person name="Shibata K."/>
            <person name="Shiraki T."/>
            <person name="Suzuki S."/>
            <person name="Tagami M."/>
            <person name="Waki K."/>
            <person name="Watahiki A."/>
            <person name="Okamura-Oho Y."/>
            <person name="Suzuki H."/>
            <person name="Kawai J."/>
            <person name="Hayashizaki Y."/>
        </authorList>
    </citation>
    <scope>NUCLEOTIDE SEQUENCE [LARGE SCALE MRNA] OF 1-1105 (ISOFORM 1)</scope>
    <source>
        <strain>C57BL/6J</strain>
        <tissue>Hippocampus</tissue>
        <tissue>Mammary gland</tissue>
        <tissue>Wolffian duct</tissue>
    </source>
</reference>
<reference key="3">
    <citation type="journal article" date="2004" name="Genome Res.">
        <title>The status, quality, and expansion of the NIH full-length cDNA project: the Mammalian Gene Collection (MGC).</title>
        <authorList>
            <consortium name="The MGC Project Team"/>
        </authorList>
    </citation>
    <scope>NUCLEOTIDE SEQUENCE [LARGE SCALE MRNA] OF 1-591 (ISOFORM 1)</scope>
    <scope>NUCLEOTIDE SEQUENCE [LARGE SCALE MRNA] OF 1285-1687</scope>
    <scope>NUCLEOTIDE SEQUENCE [LARGE SCALE MRNA] OF 2540-2811 (ISOFORM 5)</scope>
    <source>
        <strain>C57BL/6J</strain>
        <strain>Czech II</strain>
        <strain>FVB/N</strain>
        <tissue>Embryo</tissue>
        <tissue>Jaw</tissue>
        <tissue>Limb</tissue>
        <tissue>Lung</tissue>
        <tissue>Mammary tumor</tissue>
        <tissue>Thymus</tissue>
    </source>
</reference>
<reference key="4">
    <citation type="journal article" date="2003" name="DNA Res.">
        <title>Prediction of the coding sequences of mouse homologues of KIAA gene: II. The complete nucleotide sequences of 400 mouse KIAA-homologous cDNAs identified by screening of terminal sequences of cDNA clones randomly sampled from size-fractionated libraries.</title>
        <authorList>
            <person name="Okazaki N."/>
            <person name="Kikuno R."/>
            <person name="Ohara R."/>
            <person name="Inamoto S."/>
            <person name="Aizawa H."/>
            <person name="Yuasa S."/>
            <person name="Nakajima D."/>
            <person name="Nagase T."/>
            <person name="Ohara O."/>
            <person name="Koga H."/>
        </authorList>
    </citation>
    <scope>NUCLEOTIDE SEQUENCE [LARGE SCALE MRNA] OF 906-2074</scope>
    <source>
        <tissue>Brain</tissue>
    </source>
</reference>
<reference key="5">
    <citation type="journal article" date="2007" name="Proc. Natl. Acad. Sci. U.S.A.">
        <title>Large-scale phosphorylation analysis of mouse liver.</title>
        <authorList>
            <person name="Villen J."/>
            <person name="Beausoleil S.A."/>
            <person name="Gerber S.A."/>
            <person name="Gygi S.P."/>
        </authorList>
    </citation>
    <scope>PHOSPHORYLATION [LARGE SCALE ANALYSIS] AT THR-2625</scope>
    <scope>IDENTIFICATION BY MASS SPECTROMETRY [LARGE SCALE ANALYSIS]</scope>
    <source>
        <tissue>Liver</tissue>
    </source>
</reference>
<reference key="6">
    <citation type="journal article" date="2009" name="Immunity">
        <title>The phagosomal proteome in interferon-gamma-activated macrophages.</title>
        <authorList>
            <person name="Trost M."/>
            <person name="English L."/>
            <person name="Lemieux S."/>
            <person name="Courcelles M."/>
            <person name="Desjardins M."/>
            <person name="Thibault P."/>
        </authorList>
    </citation>
    <scope>PHOSPHORYLATION [LARGE SCALE ANALYSIS] AT SER-102; SER-853 AND THR-2625</scope>
    <scope>IDENTIFICATION BY MASS SPECTROMETRY [LARGE SCALE ANALYSIS]</scope>
</reference>
<reference key="7">
    <citation type="journal article" date="2009" name="Mol. Cell. Proteomics">
        <title>Large scale localization of protein phosphorylation by use of electron capture dissociation mass spectrometry.</title>
        <authorList>
            <person name="Sweet S.M."/>
            <person name="Bailey C.M."/>
            <person name="Cunningham D.L."/>
            <person name="Heath J.K."/>
            <person name="Cooper H.J."/>
        </authorList>
    </citation>
    <scope>PHOSPHORYLATION [LARGE SCALE ANALYSIS] AT THR-2625</scope>
    <scope>IDENTIFICATION BY MASS SPECTROMETRY [LARGE SCALE ANALYSIS]</scope>
    <source>
        <tissue>Embryonic fibroblast</tissue>
    </source>
</reference>
<reference key="8">
    <citation type="journal article" date="2010" name="Cell">
        <title>A tissue-specific atlas of mouse protein phosphorylation and expression.</title>
        <authorList>
            <person name="Huttlin E.L."/>
            <person name="Jedrychowski M.P."/>
            <person name="Elias J.E."/>
            <person name="Goswami T."/>
            <person name="Rad R."/>
            <person name="Beausoleil S.A."/>
            <person name="Villen J."/>
            <person name="Haas W."/>
            <person name="Sowa M.E."/>
            <person name="Gygi S.P."/>
        </authorList>
    </citation>
    <scope>PHOSPHORYLATION [LARGE SCALE ANALYSIS] AT SER-192; SER-904; THR-1238; SER-1935; SER-1938 AND THR-2625</scope>
    <scope>IDENTIFICATION BY MASS SPECTROMETRY [LARGE SCALE ANALYSIS]</scope>
    <source>
        <tissue>Brain</tissue>
        <tissue>Brown adipose tissue</tissue>
        <tissue>Heart</tissue>
        <tissue>Kidney</tissue>
        <tissue>Liver</tissue>
        <tissue>Lung</tissue>
        <tissue>Pancreas</tissue>
        <tissue>Spleen</tissue>
        <tissue>Testis</tissue>
    </source>
</reference>
<reference key="9">
    <citation type="journal article" date="2014" name="Mol. Cell. Proteomics">
        <title>Immunoaffinity enrichment and mass spectrometry analysis of protein methylation.</title>
        <authorList>
            <person name="Guo A."/>
            <person name="Gu H."/>
            <person name="Zhou J."/>
            <person name="Mulhern D."/>
            <person name="Wang Y."/>
            <person name="Lee K.A."/>
            <person name="Yang V."/>
            <person name="Aguiar M."/>
            <person name="Kornhauser J."/>
            <person name="Jia X."/>
            <person name="Ren J."/>
            <person name="Beausoleil S.A."/>
            <person name="Silva J.C."/>
            <person name="Vemulapalli V."/>
            <person name="Bedford M.T."/>
            <person name="Comb M.J."/>
        </authorList>
    </citation>
    <scope>METHYLATION [LARGE SCALE ANALYSIS] AT ARG-243; ARG-280; ARG-282; ARG-2766 AND ARG-2775</scope>
    <scope>IDENTIFICATION BY MASS SPECTROMETRY [LARGE SCALE ANALYSIS]</scope>
    <source>
        <tissue>Brain</tissue>
        <tissue>Embryo</tissue>
    </source>
</reference>
<protein>
    <recommendedName>
        <fullName>Protein PRRC2C</fullName>
    </recommendedName>
    <alternativeName>
        <fullName>BAT2 domain-containing protein 1</fullName>
    </alternativeName>
    <alternativeName>
        <fullName>HLA-B-associated transcript 2-like 2</fullName>
    </alternativeName>
    <alternativeName>
        <fullName>Proline-rich and coiled-coil-containing protein 2C</fullName>
    </alternativeName>
</protein>
<comment type="function">
    <text evidence="1">Required for efficient formation of stress granules.</text>
</comment>
<comment type="subcellular location">
    <subcellularLocation>
        <location evidence="1">Cytoplasm</location>
        <location evidence="1">Stress granule</location>
    </subcellularLocation>
</comment>
<comment type="alternative products">
    <event type="alternative splicing"/>
    <isoform>
        <id>Q3TLH4-1</id>
        <name>1</name>
        <sequence type="displayed"/>
    </isoform>
    <isoform>
        <id>Q3TLH4-5</id>
        <name>5</name>
        <sequence type="described" ref="VSP_035255"/>
    </isoform>
</comment>
<comment type="sequence caution" evidence="5">
    <conflict type="miscellaneous discrepancy">
        <sequence resource="EMBL-CDS" id="AAH06723"/>
    </conflict>
    <text>Contaminating sequence. Potential poly-A sequence.</text>
</comment>
<comment type="sequence caution" evidence="5">
    <conflict type="miscellaneous discrepancy">
        <sequence resource="EMBL-CDS" id="AAH21412"/>
    </conflict>
    <text>Contaminating sequence. Potential poly-A sequence.</text>
</comment>
<comment type="sequence caution" evidence="5">
    <conflict type="miscellaneous discrepancy">
        <sequence resource="EMBL-CDS" id="AAH37745"/>
    </conflict>
    <text>Contaminating sequence. Potential poly-A sequence.</text>
</comment>
<comment type="sequence caution" evidence="5">
    <conflict type="miscellaneous discrepancy">
        <sequence resource="EMBL-CDS" id="AAH80672"/>
    </conflict>
    <text>Contaminating sequence. Potential poly-A sequence.</text>
</comment>
<comment type="sequence caution" evidence="5">
    <conflict type="miscellaneous discrepancy">
        <sequence resource="EMBL-CDS" id="AAH99612"/>
    </conflict>
    <text>Contaminating sequence. Potential poly-A sequence.</text>
</comment>
<comment type="sequence caution" evidence="5">
    <conflict type="frameshift">
        <sequence resource="EMBL-CDS" id="BAC25414"/>
    </conflict>
</comment>
<comment type="sequence caution" evidence="5">
    <conflict type="frameshift">
        <sequence resource="EMBL-CDS" id="BAC65723"/>
    </conflict>
</comment>
<comment type="sequence caution" evidence="5">
    <conflict type="miscellaneous discrepancy">
        <sequence resource="EMBL-CDS" id="BAE22468"/>
    </conflict>
    <text>Probable cloning artifact.</text>
</comment>
<accession>Q3TLH4</accession>
<accession>E9QKG5</accession>
<accession>Q05CS4</accession>
<accession>Q05DM5</accession>
<accession>Q3TKF3</accession>
<accession>Q3UXU5</accession>
<accession>Q4FZE4</accession>
<accession>Q66K03</accession>
<accession>Q6P3F4</accession>
<accession>Q80TK3</accession>
<accession>Q80YR0</accession>
<accession>Q8BMJ4</accession>
<accession>Q8C1K7</accession>
<accession>Q8CGH3</accession>